<name>PGSA_RICBR</name>
<protein>
    <recommendedName>
        <fullName>CDP-diacylglycerol--glycerol-3-phosphate 3-phosphatidyltransferase</fullName>
        <ecNumber>2.7.8.5</ecNumber>
    </recommendedName>
    <alternativeName>
        <fullName>Phosphatidylglycerophosphate synthase</fullName>
        <shortName>PGP synthase</shortName>
    </alternativeName>
</protein>
<dbReference type="EC" id="2.7.8.5"/>
<dbReference type="EMBL" id="CP000087">
    <property type="protein sequence ID" value="ABE04091.1"/>
    <property type="molecule type" value="Genomic_DNA"/>
</dbReference>
<dbReference type="RefSeq" id="WP_011476706.1">
    <property type="nucleotide sequence ID" value="NC_007940.1"/>
</dbReference>
<dbReference type="SMR" id="Q1RKM3"/>
<dbReference type="KEGG" id="rbe:RBE_0010"/>
<dbReference type="eggNOG" id="COG0558">
    <property type="taxonomic scope" value="Bacteria"/>
</dbReference>
<dbReference type="HOGENOM" id="CLU_051314_2_3_5"/>
<dbReference type="OrthoDB" id="9796672at2"/>
<dbReference type="UniPathway" id="UPA00084">
    <property type="reaction ID" value="UER00503"/>
</dbReference>
<dbReference type="Proteomes" id="UP000001951">
    <property type="component" value="Chromosome"/>
</dbReference>
<dbReference type="GO" id="GO:0005886">
    <property type="term" value="C:plasma membrane"/>
    <property type="evidence" value="ECO:0007669"/>
    <property type="project" value="UniProtKB-SubCell"/>
</dbReference>
<dbReference type="GO" id="GO:0008444">
    <property type="term" value="F:CDP-diacylglycerol-glycerol-3-phosphate 3-phosphatidyltransferase activity"/>
    <property type="evidence" value="ECO:0007669"/>
    <property type="project" value="UniProtKB-EC"/>
</dbReference>
<dbReference type="GO" id="GO:0006655">
    <property type="term" value="P:phosphatidylglycerol biosynthetic process"/>
    <property type="evidence" value="ECO:0007669"/>
    <property type="project" value="UniProtKB-UniPathway"/>
</dbReference>
<dbReference type="Gene3D" id="1.20.120.1760">
    <property type="match status" value="1"/>
</dbReference>
<dbReference type="InterPro" id="IPR050324">
    <property type="entry name" value="CDP-alcohol_PTase-I"/>
</dbReference>
<dbReference type="InterPro" id="IPR000462">
    <property type="entry name" value="CDP-OH_P_trans"/>
</dbReference>
<dbReference type="InterPro" id="IPR043130">
    <property type="entry name" value="CDP-OH_PTrfase_TM_dom"/>
</dbReference>
<dbReference type="InterPro" id="IPR048254">
    <property type="entry name" value="CDP_ALCOHOL_P_TRANSF_CS"/>
</dbReference>
<dbReference type="InterPro" id="IPR004570">
    <property type="entry name" value="Phosphatidylglycerol_P_synth"/>
</dbReference>
<dbReference type="NCBIfam" id="TIGR00560">
    <property type="entry name" value="pgsA"/>
    <property type="match status" value="1"/>
</dbReference>
<dbReference type="PANTHER" id="PTHR14269:SF62">
    <property type="entry name" value="CDP-DIACYLGLYCEROL--GLYCEROL-3-PHOSPHATE 3-PHOSPHATIDYLTRANSFERASE 1, CHLOROPLASTIC"/>
    <property type="match status" value="1"/>
</dbReference>
<dbReference type="PANTHER" id="PTHR14269">
    <property type="entry name" value="CDP-DIACYLGLYCEROL--GLYCEROL-3-PHOSPHATE 3-PHOSPHATIDYLTRANSFERASE-RELATED"/>
    <property type="match status" value="1"/>
</dbReference>
<dbReference type="Pfam" id="PF01066">
    <property type="entry name" value="CDP-OH_P_transf"/>
    <property type="match status" value="1"/>
</dbReference>
<dbReference type="PIRSF" id="PIRSF000847">
    <property type="entry name" value="Phos_ph_gly_syn"/>
    <property type="match status" value="1"/>
</dbReference>
<dbReference type="PROSITE" id="PS00379">
    <property type="entry name" value="CDP_ALCOHOL_P_TRANSF"/>
    <property type="match status" value="1"/>
</dbReference>
<organism>
    <name type="scientific">Rickettsia bellii (strain RML369-C)</name>
    <dbReference type="NCBI Taxonomy" id="336407"/>
    <lineage>
        <taxon>Bacteria</taxon>
        <taxon>Pseudomonadati</taxon>
        <taxon>Pseudomonadota</taxon>
        <taxon>Alphaproteobacteria</taxon>
        <taxon>Rickettsiales</taxon>
        <taxon>Rickettsiaceae</taxon>
        <taxon>Rickettsieae</taxon>
        <taxon>Rickettsia</taxon>
        <taxon>belli group</taxon>
    </lineage>
</organism>
<evidence type="ECO:0000250" key="1"/>
<evidence type="ECO:0000255" key="2"/>
<evidence type="ECO:0000305" key="3"/>
<comment type="function">
    <text evidence="1">This protein catalyzes the committed step to the synthesis of the acidic phospholipids.</text>
</comment>
<comment type="catalytic activity">
    <reaction>
        <text>a CDP-1,2-diacyl-sn-glycerol + sn-glycerol 3-phosphate = a 1,2-diacyl-sn-glycero-3-phospho-(1'-sn-glycero-3'-phosphate) + CMP + H(+)</text>
        <dbReference type="Rhea" id="RHEA:12593"/>
        <dbReference type="ChEBI" id="CHEBI:15378"/>
        <dbReference type="ChEBI" id="CHEBI:57597"/>
        <dbReference type="ChEBI" id="CHEBI:58332"/>
        <dbReference type="ChEBI" id="CHEBI:60110"/>
        <dbReference type="ChEBI" id="CHEBI:60377"/>
        <dbReference type="EC" id="2.7.8.5"/>
    </reaction>
</comment>
<comment type="pathway">
    <text>Phospholipid metabolism; phosphatidylglycerol biosynthesis; phosphatidylglycerol from CDP-diacylglycerol: step 1/2.</text>
</comment>
<comment type="subcellular location">
    <subcellularLocation>
        <location evidence="1">Cell membrane</location>
        <topology evidence="1">Multi-pass membrane protein</topology>
    </subcellularLocation>
</comment>
<comment type="similarity">
    <text evidence="3">Belongs to the CDP-alcohol phosphatidyltransferase class-I family.</text>
</comment>
<gene>
    <name type="primary">pgsA</name>
    <name type="ordered locus">RBE_0010</name>
</gene>
<reference key="1">
    <citation type="journal article" date="2006" name="PLoS Genet.">
        <title>Genome sequence of Rickettsia bellii illuminates the role of amoebae in gene exchanges between intracellular pathogens.</title>
        <authorList>
            <person name="Ogata H."/>
            <person name="La Scola B."/>
            <person name="Audic S."/>
            <person name="Renesto P."/>
            <person name="Blanc G."/>
            <person name="Robert C."/>
            <person name="Fournier P.-E."/>
            <person name="Claverie J.-M."/>
            <person name="Raoult D."/>
        </authorList>
    </citation>
    <scope>NUCLEOTIDE SEQUENCE [LARGE SCALE GENOMIC DNA]</scope>
    <source>
        <strain>RML369-C</strain>
    </source>
</reference>
<keyword id="KW-1003">Cell membrane</keyword>
<keyword id="KW-0444">Lipid biosynthesis</keyword>
<keyword id="KW-0443">Lipid metabolism</keyword>
<keyword id="KW-0472">Membrane</keyword>
<keyword id="KW-0594">Phospholipid biosynthesis</keyword>
<keyword id="KW-1208">Phospholipid metabolism</keyword>
<keyword id="KW-0808">Transferase</keyword>
<keyword id="KW-0812">Transmembrane</keyword>
<keyword id="KW-1133">Transmembrane helix</keyword>
<accession>Q1RKM3</accession>
<feature type="chain" id="PRO_0000281053" description="CDP-diacylglycerol--glycerol-3-phosphate 3-phosphatidyltransferase">
    <location>
        <begin position="1"/>
        <end position="181"/>
    </location>
</feature>
<feature type="transmembrane region" description="Helical" evidence="2">
    <location>
        <begin position="8"/>
        <end position="28"/>
    </location>
</feature>
<feature type="transmembrane region" description="Helical" evidence="2">
    <location>
        <begin position="35"/>
        <end position="55"/>
    </location>
</feature>
<feature type="transmembrane region" description="Helical" evidence="2">
    <location>
        <begin position="64"/>
        <end position="84"/>
    </location>
</feature>
<feature type="transmembrane region" description="Helical" evidence="2">
    <location>
        <begin position="148"/>
        <end position="168"/>
    </location>
</feature>
<sequence length="181" mass="20156">MKIDENLPNYLTIARIAAIPVIILTFYINSPLARMLGALLFVLASITDFFDGYIARKYNLVTSFGKMLDPIADKLLVGCVIIMLLKKSDVDEIPCLLILAREFLVSGLREFLALVKVSVPVSTLAKTKTFLQMFALSILVLGSKGSNIIYLDLVGEIILWIAAFLTIITGYSYFKACKKYF</sequence>
<proteinExistence type="inferred from homology"/>